<feature type="chain" id="PRO_0000074000" description="DNA-directed RNA polymerases I, II, and III subunit RPABC3">
    <location>
        <begin position="1"/>
        <end position="125"/>
    </location>
</feature>
<feature type="region of interest" description="Non-specific ssDNA binding" evidence="1">
    <location>
        <begin position="17"/>
        <end position="39"/>
    </location>
</feature>
<feature type="sequence conflict" description="In Ref. 4; CAA68926/CAA68927." evidence="2" ref="4">
    <original>LLRR</original>
    <variation>YLEGK</variation>
    <location>
        <begin position="122"/>
        <end position="125"/>
    </location>
</feature>
<feature type="strand" evidence="3">
    <location>
        <begin position="5"/>
        <end position="17"/>
    </location>
</feature>
<feature type="strand" evidence="3">
    <location>
        <begin position="25"/>
        <end position="31"/>
    </location>
</feature>
<feature type="strand" evidence="3">
    <location>
        <begin position="37"/>
        <end position="42"/>
    </location>
</feature>
<feature type="turn" evidence="3">
    <location>
        <begin position="44"/>
        <end position="46"/>
    </location>
</feature>
<feature type="strand" evidence="3">
    <location>
        <begin position="54"/>
        <end position="61"/>
    </location>
</feature>
<feature type="helix" evidence="3">
    <location>
        <begin position="66"/>
        <end position="71"/>
    </location>
</feature>
<feature type="strand" evidence="3">
    <location>
        <begin position="73"/>
        <end position="85"/>
    </location>
</feature>
<feature type="strand" evidence="3">
    <location>
        <begin position="89"/>
        <end position="97"/>
    </location>
</feature>
<feature type="strand" evidence="3">
    <location>
        <begin position="100"/>
        <end position="107"/>
    </location>
</feature>
<feature type="helix" evidence="3">
    <location>
        <begin position="108"/>
        <end position="111"/>
    </location>
</feature>
<feature type="strand" evidence="3">
    <location>
        <begin position="116"/>
        <end position="124"/>
    </location>
</feature>
<protein>
    <recommendedName>
        <fullName>DNA-directed RNA polymerases I, II, and III subunit RPABC3</fullName>
        <shortName>RNA polymerases I, II, and III subunit ABC3</shortName>
    </recommendedName>
    <alternativeName>
        <fullName>DNA-directed RNA polymerases I, II, and III 14.5 kDa polypeptide</fullName>
    </alternativeName>
    <alternativeName>
        <fullName>RPC14</fullName>
    </alternativeName>
</protein>
<dbReference type="EMBL" id="D89595">
    <property type="protein sequence ID" value="BAA34367.1"/>
    <property type="molecule type" value="Genomic_DNA"/>
</dbReference>
<dbReference type="EMBL" id="D86555">
    <property type="protein sequence ID" value="BAA22803.1"/>
    <property type="molecule type" value="mRNA"/>
</dbReference>
<dbReference type="EMBL" id="AF020780">
    <property type="protein sequence ID" value="AAB93482.1"/>
    <property type="molecule type" value="mRNA"/>
</dbReference>
<dbReference type="EMBL" id="AF029688">
    <property type="protein sequence ID" value="AAC39321.1"/>
    <property type="molecule type" value="Genomic_DNA"/>
</dbReference>
<dbReference type="EMBL" id="Y07643">
    <property type="protein sequence ID" value="CAA68926.1"/>
    <property type="molecule type" value="mRNA"/>
</dbReference>
<dbReference type="EMBL" id="Y07644">
    <property type="protein sequence ID" value="CAA68927.1"/>
    <property type="molecule type" value="mRNA"/>
</dbReference>
<dbReference type="EMBL" id="CU329671">
    <property type="protein sequence ID" value="CAA18430.1"/>
    <property type="molecule type" value="Genomic_DNA"/>
</dbReference>
<dbReference type="PIR" id="T43540">
    <property type="entry name" value="T43540"/>
</dbReference>
<dbReference type="PIR" id="T45232">
    <property type="entry name" value="T45232"/>
</dbReference>
<dbReference type="RefSeq" id="NP_595915.1">
    <property type="nucleotide sequence ID" value="NM_001021823.2"/>
</dbReference>
<dbReference type="PDB" id="3H0G">
    <property type="method" value="X-ray"/>
    <property type="resolution" value="3.65 A"/>
    <property type="chains" value="H/T=1-125"/>
</dbReference>
<dbReference type="PDB" id="5U0S">
    <property type="method" value="EM"/>
    <property type="resolution" value="7.80 A"/>
    <property type="chains" value="h=1-125"/>
</dbReference>
<dbReference type="PDB" id="7AOC">
    <property type="method" value="EM"/>
    <property type="resolution" value="3.84 A"/>
    <property type="chains" value="H=1-125"/>
</dbReference>
<dbReference type="PDB" id="7AOD">
    <property type="method" value="EM"/>
    <property type="resolution" value="4.50 A"/>
    <property type="chains" value="H/T=1-125"/>
</dbReference>
<dbReference type="PDB" id="7AOE">
    <property type="method" value="EM"/>
    <property type="resolution" value="3.90 A"/>
    <property type="chains" value="H=1-125"/>
</dbReference>
<dbReference type="PDB" id="8QSZ">
    <property type="method" value="EM"/>
    <property type="resolution" value="2.67 A"/>
    <property type="chains" value="H=1-125"/>
</dbReference>
<dbReference type="PDBsum" id="3H0G"/>
<dbReference type="PDBsum" id="5U0S"/>
<dbReference type="PDBsum" id="7AOC"/>
<dbReference type="PDBsum" id="7AOD"/>
<dbReference type="PDBsum" id="7AOE"/>
<dbReference type="PDBsum" id="8QSZ"/>
<dbReference type="EMDB" id="EMD-11840"/>
<dbReference type="EMDB" id="EMD-11841"/>
<dbReference type="EMDB" id="EMD-11842"/>
<dbReference type="EMDB" id="EMD-18643"/>
<dbReference type="EMDB" id="EMD-8480"/>
<dbReference type="SMR" id="Q92399"/>
<dbReference type="BioGRID" id="276344">
    <property type="interactions" value="12"/>
</dbReference>
<dbReference type="ComplexPortal" id="CPX-2661">
    <property type="entry name" value="DNA-directed RNA polymerase II complex"/>
</dbReference>
<dbReference type="ComplexPortal" id="CPX-8905">
    <property type="entry name" value="DNA-directed RNA polymerase III complex"/>
</dbReference>
<dbReference type="ComplexPortal" id="CPX-8907">
    <property type="entry name" value="DNA-directed RNA polymerase I complex"/>
</dbReference>
<dbReference type="FunCoup" id="Q92399">
    <property type="interactions" value="495"/>
</dbReference>
<dbReference type="IntAct" id="Q92399">
    <property type="interactions" value="1"/>
</dbReference>
<dbReference type="STRING" id="284812.Q92399"/>
<dbReference type="iPTMnet" id="Q92399"/>
<dbReference type="PaxDb" id="4896-SPBC14C8.12.1"/>
<dbReference type="EnsemblFungi" id="SPBC14C8.12.1">
    <property type="protein sequence ID" value="SPBC14C8.12.1:pep"/>
    <property type="gene ID" value="SPBC14C8.12"/>
</dbReference>
<dbReference type="GeneID" id="2539794"/>
<dbReference type="KEGG" id="spo:2539794"/>
<dbReference type="PomBase" id="SPBC14C8.12">
    <property type="gene designation" value="rpb8"/>
</dbReference>
<dbReference type="VEuPathDB" id="FungiDB:SPBC14C8.12"/>
<dbReference type="eggNOG" id="KOG3400">
    <property type="taxonomic scope" value="Eukaryota"/>
</dbReference>
<dbReference type="HOGENOM" id="CLU_103864_1_1_1"/>
<dbReference type="InParanoid" id="Q92399"/>
<dbReference type="OMA" id="KEDDKGW"/>
<dbReference type="PhylomeDB" id="Q92399"/>
<dbReference type="Reactome" id="R-SPO-113418">
    <property type="pathway name" value="Formation of the Early Elongation Complex"/>
</dbReference>
<dbReference type="Reactome" id="R-SPO-5578749">
    <property type="pathway name" value="Transcriptional regulation by small RNAs"/>
</dbReference>
<dbReference type="Reactome" id="R-SPO-674695">
    <property type="pathway name" value="RNA Polymerase II Pre-transcription Events"/>
</dbReference>
<dbReference type="Reactome" id="R-SPO-6781823">
    <property type="pathway name" value="Formation of TC-NER Pre-Incision Complex"/>
</dbReference>
<dbReference type="Reactome" id="R-SPO-6782135">
    <property type="pathway name" value="Dual incision in TC-NER"/>
</dbReference>
<dbReference type="Reactome" id="R-SPO-6782210">
    <property type="pathway name" value="Gap-filling DNA repair synthesis and ligation in TC-NER"/>
</dbReference>
<dbReference type="Reactome" id="R-SPO-6796648">
    <property type="pathway name" value="TP53 Regulates Transcription of DNA Repair Genes"/>
</dbReference>
<dbReference type="Reactome" id="R-SPO-6807505">
    <property type="pathway name" value="RNA polymerase II transcribes snRNA genes"/>
</dbReference>
<dbReference type="Reactome" id="R-SPO-72086">
    <property type="pathway name" value="mRNA Capping"/>
</dbReference>
<dbReference type="Reactome" id="R-SPO-72163">
    <property type="pathway name" value="mRNA Splicing - Major Pathway"/>
</dbReference>
<dbReference type="Reactome" id="R-SPO-72203">
    <property type="pathway name" value="Processing of Capped Intron-Containing Pre-mRNA"/>
</dbReference>
<dbReference type="Reactome" id="R-SPO-73762">
    <property type="pathway name" value="RNA Polymerase I Transcription Initiation"/>
</dbReference>
<dbReference type="Reactome" id="R-SPO-73772">
    <property type="pathway name" value="RNA Polymerase I Promoter Escape"/>
</dbReference>
<dbReference type="Reactome" id="R-SPO-73776">
    <property type="pathway name" value="RNA Polymerase II Promoter Escape"/>
</dbReference>
<dbReference type="Reactome" id="R-SPO-73779">
    <property type="pathway name" value="RNA Polymerase II Transcription Pre-Initiation And Promoter Opening"/>
</dbReference>
<dbReference type="Reactome" id="R-SPO-75953">
    <property type="pathway name" value="RNA Polymerase II Transcription Initiation"/>
</dbReference>
<dbReference type="Reactome" id="R-SPO-76042">
    <property type="pathway name" value="RNA Polymerase II Transcription Initiation And Promoter Clearance"/>
</dbReference>
<dbReference type="Reactome" id="R-SPO-76061">
    <property type="pathway name" value="RNA Polymerase III Transcription Initiation From Type 1 Promoter"/>
</dbReference>
<dbReference type="Reactome" id="R-SPO-76066">
    <property type="pathway name" value="RNA Polymerase III Transcription Initiation From Type 2 Promoter"/>
</dbReference>
<dbReference type="Reactome" id="R-SPO-77075">
    <property type="pathway name" value="RNA Pol II CTD phosphorylation and interaction with CE"/>
</dbReference>
<dbReference type="Reactome" id="R-SPO-9018519">
    <property type="pathway name" value="Estrogen-dependent gene expression"/>
</dbReference>
<dbReference type="EvolutionaryTrace" id="Q92399"/>
<dbReference type="PRO" id="PR:Q92399"/>
<dbReference type="Proteomes" id="UP000002485">
    <property type="component" value="Chromosome II"/>
</dbReference>
<dbReference type="GO" id="GO:0005829">
    <property type="term" value="C:cytosol"/>
    <property type="evidence" value="ECO:0007005"/>
    <property type="project" value="PomBase"/>
</dbReference>
<dbReference type="GO" id="GO:0005634">
    <property type="term" value="C:nucleus"/>
    <property type="evidence" value="ECO:0007005"/>
    <property type="project" value="PomBase"/>
</dbReference>
<dbReference type="GO" id="GO:0005736">
    <property type="term" value="C:RNA polymerase I complex"/>
    <property type="evidence" value="ECO:0000314"/>
    <property type="project" value="PomBase"/>
</dbReference>
<dbReference type="GO" id="GO:0005665">
    <property type="term" value="C:RNA polymerase II, core complex"/>
    <property type="evidence" value="ECO:0000314"/>
    <property type="project" value="PomBase"/>
</dbReference>
<dbReference type="GO" id="GO:0016591">
    <property type="term" value="C:RNA polymerase II, holoenzyme"/>
    <property type="evidence" value="ECO:0000269"/>
    <property type="project" value="PomBase"/>
</dbReference>
<dbReference type="GO" id="GO:0005666">
    <property type="term" value="C:RNA polymerase III complex"/>
    <property type="evidence" value="ECO:0000314"/>
    <property type="project" value="PomBase"/>
</dbReference>
<dbReference type="GO" id="GO:0003677">
    <property type="term" value="F:DNA binding"/>
    <property type="evidence" value="ECO:0007669"/>
    <property type="project" value="UniProtKB-KW"/>
</dbReference>
<dbReference type="GO" id="GO:0003899">
    <property type="term" value="F:DNA-directed RNA polymerase activity"/>
    <property type="evidence" value="ECO:0007669"/>
    <property type="project" value="InterPro"/>
</dbReference>
<dbReference type="GO" id="GO:0006366">
    <property type="term" value="P:transcription by RNA polymerase II"/>
    <property type="evidence" value="ECO:0000304"/>
    <property type="project" value="PomBase"/>
</dbReference>
<dbReference type="GO" id="GO:0006383">
    <property type="term" value="P:transcription by RNA polymerase III"/>
    <property type="evidence" value="ECO:0000304"/>
    <property type="project" value="PomBase"/>
</dbReference>
<dbReference type="GO" id="GO:0006362">
    <property type="term" value="P:transcription elongation by RNA polymerase I"/>
    <property type="evidence" value="ECO:0000269"/>
    <property type="project" value="PomBase"/>
</dbReference>
<dbReference type="FunFam" id="2.40.50.140:FF:000436">
    <property type="entry name" value="DNA-directed RNA polymerases I, II, and III subunit RPABC3"/>
    <property type="match status" value="1"/>
</dbReference>
<dbReference type="Gene3D" id="2.40.50.140">
    <property type="entry name" value="Nucleic acid-binding proteins"/>
    <property type="match status" value="1"/>
</dbReference>
<dbReference type="InterPro" id="IPR012340">
    <property type="entry name" value="NA-bd_OB-fold"/>
</dbReference>
<dbReference type="InterPro" id="IPR005570">
    <property type="entry name" value="RPABC3"/>
</dbReference>
<dbReference type="PANTHER" id="PTHR10917">
    <property type="entry name" value="DNA-DIRECTED RNA POLYMERASES I, II, AND III SUBUNIT RPABC3"/>
    <property type="match status" value="1"/>
</dbReference>
<dbReference type="PANTHER" id="PTHR10917:SF0">
    <property type="entry name" value="DNA-DIRECTED RNA POLYMERASES I, II, AND III SUBUNIT RPABC3"/>
    <property type="match status" value="1"/>
</dbReference>
<dbReference type="Pfam" id="PF03870">
    <property type="entry name" value="RNA_pol_Rpb8"/>
    <property type="match status" value="1"/>
</dbReference>
<dbReference type="PIRSF" id="PIRSF000779">
    <property type="entry name" value="RNA_pol_Rpb8"/>
    <property type="match status" value="1"/>
</dbReference>
<dbReference type="SMART" id="SM00658">
    <property type="entry name" value="RPOL8c"/>
    <property type="match status" value="1"/>
</dbReference>
<dbReference type="SUPFAM" id="SSF50249">
    <property type="entry name" value="Nucleic acid-binding proteins"/>
    <property type="match status" value="1"/>
</dbReference>
<sequence>MSESVLLDEIFTVTSVDKQKYQRVSRITAVSGQNDMNLTLDINSQIYPLEKDATFSLQITSNLNSPDLKEAADYIMYGKVYRVEEAKDEKVSVYVSFGGLLMAIEGSHRKLYRLSLDHVYLLLRR</sequence>
<comment type="function">
    <text>DNA-dependent RNA polymerase catalyzes the transcription of DNA into RNA using the four ribonucleoside triphosphates as substrates. Common component of RNA polymerases I, II and III which synthesize ribosomal RNA precursors, mRNA precursors and many functional non-coding RNAs, and small RNAs, such as 5S rRNA and tRNAs, respectively.</text>
</comment>
<comment type="subunit">
    <text evidence="1">Component of the RNA polymerase I (Pol I), RNA polymerase II (Pol II) and RNA polymerase III (Pol III) complexes consisting of 14, 12 and 17 subunits, respectively. Directly interacts with POLR2A (By similarity).</text>
</comment>
<comment type="subcellular location">
    <subcellularLocation>
        <location evidence="1">Nucleus</location>
    </subcellularLocation>
</comment>
<comment type="similarity">
    <text evidence="2">Belongs to the eukaryotic RPB8 RNA polymerase subunit family.</text>
</comment>
<gene>
    <name type="primary">rpb8</name>
    <name type="ORF">SPBC14C8.12</name>
</gene>
<proteinExistence type="evidence at protein level"/>
<keyword id="KW-0002">3D-structure</keyword>
<keyword id="KW-0238">DNA-binding</keyword>
<keyword id="KW-0240">DNA-directed RNA polymerase</keyword>
<keyword id="KW-0539">Nucleus</keyword>
<keyword id="KW-1185">Reference proteome</keyword>
<keyword id="KW-0804">Transcription</keyword>
<organism>
    <name type="scientific">Schizosaccharomyces pombe (strain 972 / ATCC 24843)</name>
    <name type="common">Fission yeast</name>
    <dbReference type="NCBI Taxonomy" id="284812"/>
    <lineage>
        <taxon>Eukaryota</taxon>
        <taxon>Fungi</taxon>
        <taxon>Dikarya</taxon>
        <taxon>Ascomycota</taxon>
        <taxon>Taphrinomycotina</taxon>
        <taxon>Schizosaccharomycetes</taxon>
        <taxon>Schizosaccharomycetales</taxon>
        <taxon>Schizosaccharomycetaceae</taxon>
        <taxon>Schizosaccharomyces</taxon>
    </lineage>
</organism>
<reference key="1">
    <citation type="journal article" date="1997" name="Gene">
        <title>Gene organization and protein sequence of the small subunits of Schizosaccharomyces pombe RNA polymerase II.</title>
        <authorList>
            <person name="Sakurai H."/>
            <person name="Ishihama A."/>
        </authorList>
    </citation>
    <scope>NUCLEOTIDE SEQUENCE [GENOMIC DNA / MRNA]</scope>
    <source>
        <strain>972 / ATCC 24843</strain>
    </source>
</reference>
<reference key="2">
    <citation type="journal article" date="1997" name="Tsitologiia">
        <title>Structural and functional studies of the subunits shared by nuclear RNA polymerases I, II and III of the fission yeast Schizosaccharomyces pombe.</title>
        <authorList>
            <person name="Shpakovski G.V."/>
            <person name="Lebedenko E.N."/>
        </authorList>
    </citation>
    <scope>NUCLEOTIDE SEQUENCE [MRNA]</scope>
    <source>
        <strain>972 / ATCC 24843</strain>
    </source>
</reference>
<reference key="3">
    <citation type="journal article" date="1998" name="Bioorg. Khim.">
        <title>Structural and functional characterization of rpb8+ gene of Schizosaccharomyces pombe encoding the subunit of RNA polymerase I-III specific to eukaryotes.</title>
        <authorList>
            <person name="Shpakovski G.V."/>
            <person name="Proshkin S.A."/>
            <person name="Kayushin A.L."/>
            <person name="Korosteleva M.L."/>
            <person name="Lebedenko E.N."/>
        </authorList>
    </citation>
    <scope>NUCLEOTIDE SEQUENCE [GENOMIC DNA]</scope>
    <source>
        <strain>972 / ATCC 24843</strain>
    </source>
</reference>
<reference key="4">
    <citation type="journal article" date="1999" name="Nucleic Acids Res.">
        <title>Sequence divergence of the RNA polymerase shared subunit ABC14.5 (Rpb8) selectively affects RNA polymerase III assembly in Saccharomyces cerevisiae.</title>
        <authorList>
            <person name="Voutsina A."/>
            <person name="Riva M."/>
            <person name="Carles C."/>
            <person name="Alexandraki D."/>
        </authorList>
    </citation>
    <scope>NUCLEOTIDE SEQUENCE [MRNA]</scope>
</reference>
<reference key="5">
    <citation type="journal article" date="2002" name="Nature">
        <title>The genome sequence of Schizosaccharomyces pombe.</title>
        <authorList>
            <person name="Wood V."/>
            <person name="Gwilliam R."/>
            <person name="Rajandream M.A."/>
            <person name="Lyne M.H."/>
            <person name="Lyne R."/>
            <person name="Stewart A."/>
            <person name="Sgouros J.G."/>
            <person name="Peat N."/>
            <person name="Hayles J."/>
            <person name="Baker S.G."/>
            <person name="Basham D."/>
            <person name="Bowman S."/>
            <person name="Brooks K."/>
            <person name="Brown D."/>
            <person name="Brown S."/>
            <person name="Chillingworth T."/>
            <person name="Churcher C.M."/>
            <person name="Collins M."/>
            <person name="Connor R."/>
            <person name="Cronin A."/>
            <person name="Davis P."/>
            <person name="Feltwell T."/>
            <person name="Fraser A."/>
            <person name="Gentles S."/>
            <person name="Goble A."/>
            <person name="Hamlin N."/>
            <person name="Harris D.E."/>
            <person name="Hidalgo J."/>
            <person name="Hodgson G."/>
            <person name="Holroyd S."/>
            <person name="Hornsby T."/>
            <person name="Howarth S."/>
            <person name="Huckle E.J."/>
            <person name="Hunt S."/>
            <person name="Jagels K."/>
            <person name="James K.D."/>
            <person name="Jones L."/>
            <person name="Jones M."/>
            <person name="Leather S."/>
            <person name="McDonald S."/>
            <person name="McLean J."/>
            <person name="Mooney P."/>
            <person name="Moule S."/>
            <person name="Mungall K.L."/>
            <person name="Murphy L.D."/>
            <person name="Niblett D."/>
            <person name="Odell C."/>
            <person name="Oliver K."/>
            <person name="O'Neil S."/>
            <person name="Pearson D."/>
            <person name="Quail M.A."/>
            <person name="Rabbinowitsch E."/>
            <person name="Rutherford K.M."/>
            <person name="Rutter S."/>
            <person name="Saunders D."/>
            <person name="Seeger K."/>
            <person name="Sharp S."/>
            <person name="Skelton J."/>
            <person name="Simmonds M.N."/>
            <person name="Squares R."/>
            <person name="Squares S."/>
            <person name="Stevens K."/>
            <person name="Taylor K."/>
            <person name="Taylor R.G."/>
            <person name="Tivey A."/>
            <person name="Walsh S.V."/>
            <person name="Warren T."/>
            <person name="Whitehead S."/>
            <person name="Woodward J.R."/>
            <person name="Volckaert G."/>
            <person name="Aert R."/>
            <person name="Robben J."/>
            <person name="Grymonprez B."/>
            <person name="Weltjens I."/>
            <person name="Vanstreels E."/>
            <person name="Rieger M."/>
            <person name="Schaefer M."/>
            <person name="Mueller-Auer S."/>
            <person name="Gabel C."/>
            <person name="Fuchs M."/>
            <person name="Duesterhoeft A."/>
            <person name="Fritzc C."/>
            <person name="Holzer E."/>
            <person name="Moestl D."/>
            <person name="Hilbert H."/>
            <person name="Borzym K."/>
            <person name="Langer I."/>
            <person name="Beck A."/>
            <person name="Lehrach H."/>
            <person name="Reinhardt R."/>
            <person name="Pohl T.M."/>
            <person name="Eger P."/>
            <person name="Zimmermann W."/>
            <person name="Wedler H."/>
            <person name="Wambutt R."/>
            <person name="Purnelle B."/>
            <person name="Goffeau A."/>
            <person name="Cadieu E."/>
            <person name="Dreano S."/>
            <person name="Gloux S."/>
            <person name="Lelaure V."/>
            <person name="Mottier S."/>
            <person name="Galibert F."/>
            <person name="Aves S.J."/>
            <person name="Xiang Z."/>
            <person name="Hunt C."/>
            <person name="Moore K."/>
            <person name="Hurst S.M."/>
            <person name="Lucas M."/>
            <person name="Rochet M."/>
            <person name="Gaillardin C."/>
            <person name="Tallada V.A."/>
            <person name="Garzon A."/>
            <person name="Thode G."/>
            <person name="Daga R.R."/>
            <person name="Cruzado L."/>
            <person name="Jimenez J."/>
            <person name="Sanchez M."/>
            <person name="del Rey F."/>
            <person name="Benito J."/>
            <person name="Dominguez A."/>
            <person name="Revuelta J.L."/>
            <person name="Moreno S."/>
            <person name="Armstrong J."/>
            <person name="Forsburg S.L."/>
            <person name="Cerutti L."/>
            <person name="Lowe T."/>
            <person name="McCombie W.R."/>
            <person name="Paulsen I."/>
            <person name="Potashkin J."/>
            <person name="Shpakovski G.V."/>
            <person name="Ussery D."/>
            <person name="Barrell B.G."/>
            <person name="Nurse P."/>
        </authorList>
    </citation>
    <scope>NUCLEOTIDE SEQUENCE [LARGE SCALE GENOMIC DNA]</scope>
    <source>
        <strain>972 / ATCC 24843</strain>
    </source>
</reference>
<name>RPAB3_SCHPO</name>
<evidence type="ECO:0000250" key="1"/>
<evidence type="ECO:0000305" key="2"/>
<evidence type="ECO:0007829" key="3">
    <source>
        <dbReference type="PDB" id="8QSZ"/>
    </source>
</evidence>
<accession>Q92399</accession>
<accession>O13459</accession>
<accession>O13460</accession>